<protein>
    <recommendedName>
        <fullName evidence="1">Guanosine-5'-triphosphate,3'-diphosphate pyrophosphatase</fullName>
        <ecNumber evidence="1">3.6.1.40</ecNumber>
    </recommendedName>
    <alternativeName>
        <fullName evidence="1">Guanosine pentaphosphate phosphohydrolase</fullName>
    </alternativeName>
    <alternativeName>
        <fullName evidence="1">pppGpp-5'-phosphohydrolase</fullName>
    </alternativeName>
</protein>
<keyword id="KW-0378">Hydrolase</keyword>
<name>GPPA_SALPB</name>
<evidence type="ECO:0000255" key="1">
    <source>
        <dbReference type="HAMAP-Rule" id="MF_01550"/>
    </source>
</evidence>
<gene>
    <name evidence="1" type="primary">gppA</name>
    <name type="ordered locus">SPAB_04859</name>
</gene>
<dbReference type="EC" id="3.6.1.40" evidence="1"/>
<dbReference type="EMBL" id="CP000886">
    <property type="protein sequence ID" value="ABX70163.1"/>
    <property type="molecule type" value="Genomic_DNA"/>
</dbReference>
<dbReference type="RefSeq" id="WP_001089449.1">
    <property type="nucleotide sequence ID" value="NC_010102.1"/>
</dbReference>
<dbReference type="SMR" id="A9MXF2"/>
<dbReference type="KEGG" id="spq:SPAB_04859"/>
<dbReference type="PATRIC" id="fig|1016998.12.peg.4567"/>
<dbReference type="HOGENOM" id="CLU_025908_4_0_6"/>
<dbReference type="BioCyc" id="SENT1016998:SPAB_RS19750-MONOMER"/>
<dbReference type="UniPathway" id="UPA00908">
    <property type="reaction ID" value="UER00885"/>
</dbReference>
<dbReference type="Proteomes" id="UP000008556">
    <property type="component" value="Chromosome"/>
</dbReference>
<dbReference type="GO" id="GO:0008894">
    <property type="term" value="F:guanosine-5'-triphosphate,3'-diphosphate diphosphatase activity"/>
    <property type="evidence" value="ECO:0007669"/>
    <property type="project" value="UniProtKB-UniRule"/>
</dbReference>
<dbReference type="GO" id="GO:0015974">
    <property type="term" value="P:guanosine pentaphosphate catabolic process"/>
    <property type="evidence" value="ECO:0007669"/>
    <property type="project" value="InterPro"/>
</dbReference>
<dbReference type="GO" id="GO:0015970">
    <property type="term" value="P:guanosine tetraphosphate biosynthetic process"/>
    <property type="evidence" value="ECO:0007669"/>
    <property type="project" value="UniProtKB-UniRule"/>
</dbReference>
<dbReference type="GO" id="GO:0015949">
    <property type="term" value="P:nucleobase-containing small molecule interconversion"/>
    <property type="evidence" value="ECO:0007669"/>
    <property type="project" value="TreeGrafter"/>
</dbReference>
<dbReference type="CDD" id="cd24117">
    <property type="entry name" value="ASKHA_NBD_EcGppA-like"/>
    <property type="match status" value="1"/>
</dbReference>
<dbReference type="FunFam" id="1.10.3210.10:FF:000004">
    <property type="entry name" value="Guanosine-5'-triphosphate,3'-diphosphate pyrophosphatase"/>
    <property type="match status" value="1"/>
</dbReference>
<dbReference type="FunFam" id="3.30.420.150:FF:000001">
    <property type="entry name" value="Guanosine-5'-triphosphate,3'-diphosphate pyrophosphatase"/>
    <property type="match status" value="1"/>
</dbReference>
<dbReference type="FunFam" id="3.30.420.40:FF:000023">
    <property type="entry name" value="Guanosine-5'-triphosphate,3'-diphosphate pyrophosphatase"/>
    <property type="match status" value="1"/>
</dbReference>
<dbReference type="Gene3D" id="3.30.420.40">
    <property type="match status" value="1"/>
</dbReference>
<dbReference type="Gene3D" id="3.30.420.150">
    <property type="entry name" value="Exopolyphosphatase. Domain 2"/>
    <property type="match status" value="1"/>
</dbReference>
<dbReference type="Gene3D" id="1.10.3210.10">
    <property type="entry name" value="Hypothetical protein af1432"/>
    <property type="match status" value="1"/>
</dbReference>
<dbReference type="HAMAP" id="MF_01550">
    <property type="entry name" value="GppA"/>
    <property type="match status" value="1"/>
</dbReference>
<dbReference type="InterPro" id="IPR043129">
    <property type="entry name" value="ATPase_NBD"/>
</dbReference>
<dbReference type="InterPro" id="IPR050273">
    <property type="entry name" value="GppA/Ppx_hydrolase"/>
</dbReference>
<dbReference type="InterPro" id="IPR023709">
    <property type="entry name" value="Guo-5TP_3DP_PyrP"/>
</dbReference>
<dbReference type="InterPro" id="IPR048950">
    <property type="entry name" value="Ppx_GppA_C"/>
</dbReference>
<dbReference type="InterPro" id="IPR003695">
    <property type="entry name" value="Ppx_GppA_N"/>
</dbReference>
<dbReference type="InterPro" id="IPR030673">
    <property type="entry name" value="PyroPPase_GppA_Ppx"/>
</dbReference>
<dbReference type="NCBIfam" id="NF008260">
    <property type="entry name" value="PRK11031.1"/>
    <property type="match status" value="1"/>
</dbReference>
<dbReference type="PANTHER" id="PTHR30005">
    <property type="entry name" value="EXOPOLYPHOSPHATASE"/>
    <property type="match status" value="1"/>
</dbReference>
<dbReference type="PANTHER" id="PTHR30005:SF0">
    <property type="entry name" value="RETROGRADE REGULATION PROTEIN 2"/>
    <property type="match status" value="1"/>
</dbReference>
<dbReference type="Pfam" id="PF02541">
    <property type="entry name" value="Ppx-GppA"/>
    <property type="match status" value="1"/>
</dbReference>
<dbReference type="Pfam" id="PF21447">
    <property type="entry name" value="Ppx-GppA_III"/>
    <property type="match status" value="1"/>
</dbReference>
<dbReference type="PIRSF" id="PIRSF001267">
    <property type="entry name" value="Pyrophosphatase_GppA_Ppx"/>
    <property type="match status" value="1"/>
</dbReference>
<dbReference type="SUPFAM" id="SSF53067">
    <property type="entry name" value="Actin-like ATPase domain"/>
    <property type="match status" value="2"/>
</dbReference>
<dbReference type="SUPFAM" id="SSF109604">
    <property type="entry name" value="HD-domain/PDEase-like"/>
    <property type="match status" value="1"/>
</dbReference>
<comment type="function">
    <text evidence="1">Catalyzes the conversion of pppGpp to ppGpp. Guanosine pentaphosphate (pppGpp) is a cytoplasmic signaling molecule which together with ppGpp controls the 'stringent response', an adaptive process that allows bacteria to respond to amino acid starvation, resulting in the coordinated regulation of numerous cellular activities.</text>
</comment>
<comment type="catalytic activity">
    <reaction evidence="1">
        <text>guanosine 3'-diphosphate 5'-triphosphate + H2O = guanosine 3',5'-bis(diphosphate) + phosphate + H(+)</text>
        <dbReference type="Rhea" id="RHEA:13073"/>
        <dbReference type="ChEBI" id="CHEBI:15377"/>
        <dbReference type="ChEBI" id="CHEBI:15378"/>
        <dbReference type="ChEBI" id="CHEBI:43474"/>
        <dbReference type="ChEBI" id="CHEBI:77828"/>
        <dbReference type="ChEBI" id="CHEBI:142410"/>
        <dbReference type="EC" id="3.6.1.40"/>
    </reaction>
</comment>
<comment type="pathway">
    <text evidence="1">Purine metabolism; ppGpp biosynthesis; ppGpp from GTP: step 2/2.</text>
</comment>
<comment type="similarity">
    <text evidence="1">Belongs to the GppA/Ppx family. GppA subfamily.</text>
</comment>
<feature type="chain" id="PRO_1000087732" description="Guanosine-5'-triphosphate,3'-diphosphate pyrophosphatase">
    <location>
        <begin position="1"/>
        <end position="493"/>
    </location>
</feature>
<reference key="1">
    <citation type="submission" date="2007-11" db="EMBL/GenBank/DDBJ databases">
        <authorList>
            <consortium name="The Salmonella enterica serovar Paratyphi B Genome Sequencing Project"/>
            <person name="McClelland M."/>
            <person name="Sanderson E.K."/>
            <person name="Porwollik S."/>
            <person name="Spieth J."/>
            <person name="Clifton W.S."/>
            <person name="Fulton R."/>
            <person name="Cordes M."/>
            <person name="Wollam A."/>
            <person name="Shah N."/>
            <person name="Pepin K."/>
            <person name="Bhonagiri V."/>
            <person name="Nash W."/>
            <person name="Johnson M."/>
            <person name="Thiruvilangam P."/>
            <person name="Wilson R."/>
        </authorList>
    </citation>
    <scope>NUCLEOTIDE SEQUENCE [LARGE SCALE GENOMIC DNA]</scope>
    <source>
        <strain>ATCC BAA-1250 / SPB7</strain>
    </source>
</reference>
<proteinExistence type="inferred from homology"/>
<organism>
    <name type="scientific">Salmonella paratyphi B (strain ATCC BAA-1250 / SPB7)</name>
    <dbReference type="NCBI Taxonomy" id="1016998"/>
    <lineage>
        <taxon>Bacteria</taxon>
        <taxon>Pseudomonadati</taxon>
        <taxon>Pseudomonadota</taxon>
        <taxon>Gammaproteobacteria</taxon>
        <taxon>Enterobacterales</taxon>
        <taxon>Enterobacteriaceae</taxon>
        <taxon>Salmonella</taxon>
    </lineage>
</organism>
<sequence length="493" mass="54846">MNSTSLYAAIDLGSNSFHMLVVREAAGSIQTLTRIKRKVRLAAGLNNDNHLSAEAMERGWQCLRLFAERLQDIPQPQIRVVATATLRLAVNAGEFIAKAQTILGCPVQVISGEEEARLIYQGVAHTTGGADQRLVVDIGGASTELVTGTGAQTTSLFSLSMGCVTWLERYFSDRNLAQENFDDAEKAARDVLRPVADELRFHGWKVCVGASGTVQALQEIMMAQGMDERITLAKLQQLKQRAIQCGRLEELEIEGLTLERALVFPSGLAILIAIFTELNIQSMTLAGGALREGLVYGMLHLAVDQDIRSRTLRNIQRRFIVDTDQANRVAKLADNFLKQVENAWHIEPISRELLLSACQLHEIGLSVDFKQAPYHAAYLVRHLDLPGYTPAQKKLLATLLLNQTNPVDLSSLHQQNAVPPRVAEQLCRLLRLAILFAGRRRDDLVPEITLQALNENLTLTLPSDWLAHHPLGKELIDQESQWQSYVHWPLDVR</sequence>
<accession>A9MXF2</accession>